<evidence type="ECO:0000250" key="1"/>
<evidence type="ECO:0000255" key="2"/>
<evidence type="ECO:0000305" key="3"/>
<name>MTRE_METJA</name>
<gene>
    <name type="primary">mtrE</name>
    <name type="ordered locus">MJ0847</name>
</gene>
<proteinExistence type="inferred from homology"/>
<accession>Q58257</accession>
<comment type="function">
    <text evidence="1">Part of a complex that catalyzes the formation of methyl-coenzyme M and tetrahydromethanopterin from coenzyme M and methyl-tetrahydromethanopterin. This is an energy-conserving, sodium-ion translocating step.</text>
</comment>
<comment type="catalytic activity">
    <reaction>
        <text>5-methyl-5,6,7,8-tetrahydromethanopterin + coenzyme M + 2 Na(+)(in) = 5,6,7,8-tetrahydromethanopterin + methyl-coenzyme M + 2 Na(+)(out)</text>
        <dbReference type="Rhea" id="RHEA:53492"/>
        <dbReference type="ChEBI" id="CHEBI:29101"/>
        <dbReference type="ChEBI" id="CHEBI:58103"/>
        <dbReference type="ChEBI" id="CHEBI:58116"/>
        <dbReference type="ChEBI" id="CHEBI:58286"/>
        <dbReference type="ChEBI" id="CHEBI:58319"/>
        <dbReference type="EC" id="7.2.1.4"/>
    </reaction>
</comment>
<comment type="pathway">
    <text>One-carbon metabolism; methanogenesis from CO(2); methyl-coenzyme M from 5,10-methylene-5,6,7,8-tetrahydromethanopterin: step 2/2.</text>
</comment>
<comment type="subunit">
    <text evidence="1">The complex is composed of 8 subunits; MtrA, MtrB, MtrC, MtrD, MtrE, MtrF, MtrG and MtrH.</text>
</comment>
<comment type="subcellular location">
    <subcellularLocation>
        <location evidence="3">Cell membrane</location>
        <topology evidence="3">Multi-pass membrane protein</topology>
    </subcellularLocation>
</comment>
<comment type="similarity">
    <text evidence="3">Belongs to the MtrE family.</text>
</comment>
<dbReference type="EC" id="7.2.1.4"/>
<dbReference type="EMBL" id="L77117">
    <property type="protein sequence ID" value="AAB98852.1"/>
    <property type="molecule type" value="Genomic_DNA"/>
</dbReference>
<dbReference type="PIR" id="G64405">
    <property type="entry name" value="G64405"/>
</dbReference>
<dbReference type="RefSeq" id="WP_010870361.1">
    <property type="nucleotide sequence ID" value="NC_000909.1"/>
</dbReference>
<dbReference type="SMR" id="Q58257"/>
<dbReference type="FunCoup" id="Q58257">
    <property type="interactions" value="92"/>
</dbReference>
<dbReference type="STRING" id="243232.MJ_0847"/>
<dbReference type="PaxDb" id="243232-MJ_0847"/>
<dbReference type="EnsemblBacteria" id="AAB98852">
    <property type="protein sequence ID" value="AAB98852"/>
    <property type="gene ID" value="MJ_0847"/>
</dbReference>
<dbReference type="GeneID" id="1451735"/>
<dbReference type="KEGG" id="mja:MJ_0847"/>
<dbReference type="eggNOG" id="arCOG04870">
    <property type="taxonomic scope" value="Archaea"/>
</dbReference>
<dbReference type="HOGENOM" id="CLU_958513_0_0_2"/>
<dbReference type="InParanoid" id="Q58257"/>
<dbReference type="OrthoDB" id="82302at2157"/>
<dbReference type="PhylomeDB" id="Q58257"/>
<dbReference type="UniPathway" id="UPA00640">
    <property type="reaction ID" value="UER00698"/>
</dbReference>
<dbReference type="Proteomes" id="UP000000805">
    <property type="component" value="Chromosome"/>
</dbReference>
<dbReference type="GO" id="GO:0005737">
    <property type="term" value="C:cytoplasm"/>
    <property type="evidence" value="ECO:0007669"/>
    <property type="project" value="InterPro"/>
</dbReference>
<dbReference type="GO" id="GO:0005886">
    <property type="term" value="C:plasma membrane"/>
    <property type="evidence" value="ECO:0007669"/>
    <property type="project" value="UniProtKB-SubCell"/>
</dbReference>
<dbReference type="GO" id="GO:0012506">
    <property type="term" value="C:vesicle membrane"/>
    <property type="evidence" value="ECO:0007669"/>
    <property type="project" value="InterPro"/>
</dbReference>
<dbReference type="GO" id="GO:0030269">
    <property type="term" value="F:tetrahydromethanopterin S-methyltransferase activity"/>
    <property type="evidence" value="ECO:0007669"/>
    <property type="project" value="UniProtKB-UniRule"/>
</dbReference>
<dbReference type="GO" id="GO:0019386">
    <property type="term" value="P:methanogenesis, from carbon dioxide"/>
    <property type="evidence" value="ECO:0007669"/>
    <property type="project" value="UniProtKB-UniRule"/>
</dbReference>
<dbReference type="GO" id="GO:0032259">
    <property type="term" value="P:methylation"/>
    <property type="evidence" value="ECO:0007669"/>
    <property type="project" value="UniProtKB-KW"/>
</dbReference>
<dbReference type="GO" id="GO:0006730">
    <property type="term" value="P:one-carbon metabolic process"/>
    <property type="evidence" value="ECO:0007669"/>
    <property type="project" value="UniProtKB-UniRule"/>
</dbReference>
<dbReference type="HAMAP" id="MF_01098">
    <property type="entry name" value="MtrE"/>
    <property type="match status" value="1"/>
</dbReference>
<dbReference type="InterPro" id="IPR005780">
    <property type="entry name" value="MeTrfase_E"/>
</dbReference>
<dbReference type="NCBIfam" id="TIGR01113">
    <property type="entry name" value="mtrE"/>
    <property type="match status" value="1"/>
</dbReference>
<dbReference type="Pfam" id="PF04206">
    <property type="entry name" value="MtrE"/>
    <property type="match status" value="1"/>
</dbReference>
<dbReference type="PIRSF" id="PIRSF016509">
    <property type="entry name" value="MtrE"/>
    <property type="match status" value="1"/>
</dbReference>
<keyword id="KW-1003">Cell membrane</keyword>
<keyword id="KW-0472">Membrane</keyword>
<keyword id="KW-0484">Methanogenesis</keyword>
<keyword id="KW-0489">Methyltransferase</keyword>
<keyword id="KW-0554">One-carbon metabolism</keyword>
<keyword id="KW-1185">Reference proteome</keyword>
<keyword id="KW-0808">Transferase</keyword>
<keyword id="KW-1278">Translocase</keyword>
<keyword id="KW-0812">Transmembrane</keyword>
<keyword id="KW-1133">Transmembrane helix</keyword>
<feature type="chain" id="PRO_0000147539" description="Tetrahydromethanopterin S-methyltransferase subunit E">
    <location>
        <begin position="1"/>
        <end position="303"/>
    </location>
</feature>
<feature type="transmembrane region" description="Helical" evidence="2">
    <location>
        <begin position="3"/>
        <end position="23"/>
    </location>
</feature>
<feature type="transmembrane region" description="Helical" evidence="2">
    <location>
        <begin position="63"/>
        <end position="83"/>
    </location>
</feature>
<feature type="transmembrane region" description="Helical" evidence="2">
    <location>
        <begin position="86"/>
        <end position="106"/>
    </location>
</feature>
<feature type="transmembrane region" description="Helical" evidence="2">
    <location>
        <begin position="133"/>
        <end position="153"/>
    </location>
</feature>
<feature type="transmembrane region" description="Helical" evidence="2">
    <location>
        <begin position="157"/>
        <end position="177"/>
    </location>
</feature>
<feature type="transmembrane region" description="Helical" evidence="2">
    <location>
        <begin position="226"/>
        <end position="246"/>
    </location>
</feature>
<feature type="transmembrane region" description="Helical" evidence="2">
    <location>
        <begin position="266"/>
        <end position="286"/>
    </location>
</feature>
<organism>
    <name type="scientific">Methanocaldococcus jannaschii (strain ATCC 43067 / DSM 2661 / JAL-1 / JCM 10045 / NBRC 100440)</name>
    <name type="common">Methanococcus jannaschii</name>
    <dbReference type="NCBI Taxonomy" id="243232"/>
    <lineage>
        <taxon>Archaea</taxon>
        <taxon>Methanobacteriati</taxon>
        <taxon>Methanobacteriota</taxon>
        <taxon>Methanomada group</taxon>
        <taxon>Methanococci</taxon>
        <taxon>Methanococcales</taxon>
        <taxon>Methanocaldococcaceae</taxon>
        <taxon>Methanocaldococcus</taxon>
    </lineage>
</organism>
<reference key="1">
    <citation type="journal article" date="1996" name="Science">
        <title>Complete genome sequence of the methanogenic archaeon, Methanococcus jannaschii.</title>
        <authorList>
            <person name="Bult C.J."/>
            <person name="White O."/>
            <person name="Olsen G.J."/>
            <person name="Zhou L."/>
            <person name="Fleischmann R.D."/>
            <person name="Sutton G.G."/>
            <person name="Blake J.A."/>
            <person name="FitzGerald L.M."/>
            <person name="Clayton R.A."/>
            <person name="Gocayne J.D."/>
            <person name="Kerlavage A.R."/>
            <person name="Dougherty B.A."/>
            <person name="Tomb J.-F."/>
            <person name="Adams M.D."/>
            <person name="Reich C.I."/>
            <person name="Overbeek R."/>
            <person name="Kirkness E.F."/>
            <person name="Weinstock K.G."/>
            <person name="Merrick J.M."/>
            <person name="Glodek A."/>
            <person name="Scott J.L."/>
            <person name="Geoghagen N.S.M."/>
            <person name="Weidman J.F."/>
            <person name="Fuhrmann J.L."/>
            <person name="Nguyen D."/>
            <person name="Utterback T.R."/>
            <person name="Kelley J.M."/>
            <person name="Peterson J.D."/>
            <person name="Sadow P.W."/>
            <person name="Hanna M.C."/>
            <person name="Cotton M.D."/>
            <person name="Roberts K.M."/>
            <person name="Hurst M.A."/>
            <person name="Kaine B.P."/>
            <person name="Borodovsky M."/>
            <person name="Klenk H.-P."/>
            <person name="Fraser C.M."/>
            <person name="Smith H.O."/>
            <person name="Woese C.R."/>
            <person name="Venter J.C."/>
        </authorList>
    </citation>
    <scope>NUCLEOTIDE SEQUENCE [LARGE SCALE GENOMIC DNA]</scope>
    <source>
        <strain>ATCC 43067 / DSM 2661 / JAL-1 / JCM 10045 / NBRC 100440</strain>
    </source>
</reference>
<sequence>MDATLIALGALALSGALATVAGCAEDLESDVGSQSNPNSQVQLAPQMGNIHRYFNKAISGEPVSYGLYVAVAGTVAYAIMQMGLNPILALILGAGVAAFVHGAYAISAYLGRIVGQSKNFGQPVYWDVVMSHLGPIVGHGFIAVFCMVLMAYLANTILGNPFPLPLIALIFGITVGAIGSSTGDVHYGAEREYQKYPFGGGVPVANHGDIDIKAEYGLRNGMDSSYFCSRLGGVLTGLCFGLIVFLDGWRGVLGDILKGGQGGSVITASIISIVIGLIIVAILAIINRKVEVFARNKYGPYTK</sequence>
<protein>
    <recommendedName>
        <fullName>Tetrahydromethanopterin S-methyltransferase subunit E</fullName>
        <ecNumber>7.2.1.4</ecNumber>
    </recommendedName>
    <alternativeName>
        <fullName>N5-methyltetrahydromethanopterin--coenzyme M methyltransferase subunit E</fullName>
    </alternativeName>
</protein>